<dbReference type="EC" id="1.14.99.29" evidence="1"/>
<dbReference type="EMBL" id="CH408032">
    <property type="protein sequence ID" value="EAQ88157.1"/>
    <property type="molecule type" value="Genomic_DNA"/>
</dbReference>
<dbReference type="RefSeq" id="XP_001223990.1">
    <property type="nucleotide sequence ID" value="XM_001223989.1"/>
</dbReference>
<dbReference type="SMR" id="Q2H0C0"/>
<dbReference type="FunCoup" id="Q2H0C0">
    <property type="interactions" value="809"/>
</dbReference>
<dbReference type="STRING" id="306901.Q2H0C0"/>
<dbReference type="GeneID" id="4391909"/>
<dbReference type="VEuPathDB" id="FungiDB:CHGG_04776"/>
<dbReference type="eggNOG" id="KOG0567">
    <property type="taxonomic scope" value="Eukaryota"/>
</dbReference>
<dbReference type="HOGENOM" id="CLU_053974_0_0_1"/>
<dbReference type="InParanoid" id="Q2H0C0"/>
<dbReference type="OMA" id="LQEPCSI"/>
<dbReference type="OrthoDB" id="421002at2759"/>
<dbReference type="UniPathway" id="UPA00354"/>
<dbReference type="Proteomes" id="UP000001056">
    <property type="component" value="Unassembled WGS sequence"/>
</dbReference>
<dbReference type="GO" id="GO:0005737">
    <property type="term" value="C:cytoplasm"/>
    <property type="evidence" value="ECO:0007669"/>
    <property type="project" value="UniProtKB-SubCell"/>
</dbReference>
<dbReference type="GO" id="GO:0005634">
    <property type="term" value="C:nucleus"/>
    <property type="evidence" value="ECO:0007669"/>
    <property type="project" value="UniProtKB-SubCell"/>
</dbReference>
<dbReference type="GO" id="GO:0019135">
    <property type="term" value="F:deoxyhypusine monooxygenase activity"/>
    <property type="evidence" value="ECO:0007669"/>
    <property type="project" value="UniProtKB-UniRule"/>
</dbReference>
<dbReference type="GO" id="GO:0046872">
    <property type="term" value="F:metal ion binding"/>
    <property type="evidence" value="ECO:0007669"/>
    <property type="project" value="UniProtKB-KW"/>
</dbReference>
<dbReference type="Gene3D" id="1.25.10.10">
    <property type="entry name" value="Leucine-rich Repeat Variant"/>
    <property type="match status" value="2"/>
</dbReference>
<dbReference type="HAMAP" id="MF_03101">
    <property type="entry name" value="Deoxyhypusine_hydroxylase"/>
    <property type="match status" value="1"/>
</dbReference>
<dbReference type="InterPro" id="IPR011989">
    <property type="entry name" value="ARM-like"/>
</dbReference>
<dbReference type="InterPro" id="IPR016024">
    <property type="entry name" value="ARM-type_fold"/>
</dbReference>
<dbReference type="InterPro" id="IPR027517">
    <property type="entry name" value="Deoxyhypusine_hydroxylase"/>
</dbReference>
<dbReference type="InterPro" id="IPR021133">
    <property type="entry name" value="HEAT_type_2"/>
</dbReference>
<dbReference type="InterPro" id="IPR004155">
    <property type="entry name" value="PBS_lyase_HEAT"/>
</dbReference>
<dbReference type="PANTHER" id="PTHR12697:SF5">
    <property type="entry name" value="DEOXYHYPUSINE HYDROXYLASE"/>
    <property type="match status" value="1"/>
</dbReference>
<dbReference type="PANTHER" id="PTHR12697">
    <property type="entry name" value="PBS LYASE HEAT-LIKE PROTEIN"/>
    <property type="match status" value="1"/>
</dbReference>
<dbReference type="Pfam" id="PF13646">
    <property type="entry name" value="HEAT_2"/>
    <property type="match status" value="2"/>
</dbReference>
<dbReference type="SMART" id="SM00567">
    <property type="entry name" value="EZ_HEAT"/>
    <property type="match status" value="6"/>
</dbReference>
<dbReference type="SUPFAM" id="SSF48371">
    <property type="entry name" value="ARM repeat"/>
    <property type="match status" value="1"/>
</dbReference>
<dbReference type="PROSITE" id="PS50077">
    <property type="entry name" value="HEAT_REPEAT"/>
    <property type="match status" value="1"/>
</dbReference>
<evidence type="ECO:0000255" key="1">
    <source>
        <dbReference type="HAMAP-Rule" id="MF_03101"/>
    </source>
</evidence>
<evidence type="ECO:0000256" key="2">
    <source>
        <dbReference type="SAM" id="MobiDB-lite"/>
    </source>
</evidence>
<accession>Q2H0C0</accession>
<keyword id="KW-0963">Cytoplasm</keyword>
<keyword id="KW-0386">Hypusine biosynthesis</keyword>
<keyword id="KW-0408">Iron</keyword>
<keyword id="KW-0479">Metal-binding</keyword>
<keyword id="KW-0503">Monooxygenase</keyword>
<keyword id="KW-0539">Nucleus</keyword>
<keyword id="KW-0560">Oxidoreductase</keyword>
<keyword id="KW-1185">Reference proteome</keyword>
<keyword id="KW-0677">Repeat</keyword>
<feature type="chain" id="PRO_0000283660" description="Deoxyhypusine hydroxylase">
    <location>
        <begin position="1"/>
        <end position="344"/>
    </location>
</feature>
<feature type="repeat" description="HEAT-like PBS-type 1">
    <location>
        <begin position="81"/>
        <end position="107"/>
    </location>
</feature>
<feature type="repeat" description="HEAT-like PBS-type 2">
    <location>
        <begin position="115"/>
        <end position="140"/>
    </location>
</feature>
<feature type="repeat" description="HEAT-like PBS-type 3">
    <location>
        <begin position="210"/>
        <end position="240"/>
    </location>
</feature>
<feature type="repeat" description="HEAT-like PBS-type 4">
    <location>
        <begin position="248"/>
        <end position="274"/>
    </location>
</feature>
<feature type="repeat" description="HEAT-like PBS-type 5">
    <location>
        <begin position="281"/>
        <end position="308"/>
    </location>
</feature>
<feature type="region of interest" description="Disordered" evidence="2">
    <location>
        <begin position="169"/>
        <end position="188"/>
    </location>
</feature>
<feature type="binding site" evidence="1">
    <location>
        <position position="83"/>
    </location>
    <ligand>
        <name>Fe cation</name>
        <dbReference type="ChEBI" id="CHEBI:24875"/>
        <label>1</label>
    </ligand>
</feature>
<feature type="binding site" evidence="1">
    <location>
        <position position="84"/>
    </location>
    <ligand>
        <name>Fe cation</name>
        <dbReference type="ChEBI" id="CHEBI:24875"/>
        <label>1</label>
    </ligand>
</feature>
<feature type="binding site" evidence="1">
    <location>
        <position position="116"/>
    </location>
    <ligand>
        <name>Fe cation</name>
        <dbReference type="ChEBI" id="CHEBI:24875"/>
        <label>1</label>
    </ligand>
</feature>
<feature type="binding site" evidence="1">
    <location>
        <position position="117"/>
    </location>
    <ligand>
        <name>Fe cation</name>
        <dbReference type="ChEBI" id="CHEBI:24875"/>
        <label>1</label>
    </ligand>
</feature>
<feature type="binding site" evidence="1">
    <location>
        <position position="250"/>
    </location>
    <ligand>
        <name>Fe cation</name>
        <dbReference type="ChEBI" id="CHEBI:24875"/>
        <label>2</label>
    </ligand>
</feature>
<feature type="binding site" evidence="1">
    <location>
        <position position="251"/>
    </location>
    <ligand>
        <name>Fe cation</name>
        <dbReference type="ChEBI" id="CHEBI:24875"/>
        <label>2</label>
    </ligand>
</feature>
<feature type="binding site" evidence="1">
    <location>
        <position position="283"/>
    </location>
    <ligand>
        <name>Fe cation</name>
        <dbReference type="ChEBI" id="CHEBI:24875"/>
        <label>2</label>
    </ligand>
</feature>
<feature type="binding site" evidence="1">
    <location>
        <position position="284"/>
    </location>
    <ligand>
        <name>Fe cation</name>
        <dbReference type="ChEBI" id="CHEBI:24875"/>
        <label>2</label>
    </ligand>
</feature>
<gene>
    <name evidence="1" type="primary">LIA1</name>
    <name type="ORF">CHGG_04776</name>
</gene>
<comment type="function">
    <text evidence="1">Catalyzes the hydroxylation of the N(6)-(4-aminobutyl)-L-lysine intermediate to form hypusine, an essential post-translational modification only found in mature eIF-5A factor.</text>
</comment>
<comment type="catalytic activity">
    <reaction evidence="1">
        <text>[eIF5A protein]-deoxyhypusine + AH2 + O2 = [eIF5A protein]-hypusine + A + H2O</text>
        <dbReference type="Rhea" id="RHEA:14101"/>
        <dbReference type="Rhea" id="RHEA-COMP:10144"/>
        <dbReference type="Rhea" id="RHEA-COMP:12592"/>
        <dbReference type="ChEBI" id="CHEBI:13193"/>
        <dbReference type="ChEBI" id="CHEBI:15377"/>
        <dbReference type="ChEBI" id="CHEBI:15379"/>
        <dbReference type="ChEBI" id="CHEBI:17499"/>
        <dbReference type="ChEBI" id="CHEBI:82657"/>
        <dbReference type="ChEBI" id="CHEBI:91175"/>
        <dbReference type="EC" id="1.14.99.29"/>
    </reaction>
</comment>
<comment type="cofactor">
    <cofactor evidence="1">
        <name>Fe(2+)</name>
        <dbReference type="ChEBI" id="CHEBI:29033"/>
    </cofactor>
    <text evidence="1">Binds 2 Fe(2+) ions per subunit.</text>
</comment>
<comment type="pathway">
    <text evidence="1">Protein modification; eIF5A hypusination.</text>
</comment>
<comment type="subcellular location">
    <subcellularLocation>
        <location evidence="1">Cytoplasm</location>
    </subcellularLocation>
    <subcellularLocation>
        <location evidence="1">Nucleus</location>
    </subcellularLocation>
</comment>
<comment type="similarity">
    <text evidence="1">Belongs to the deoxyhypusine hydroxylase family.</text>
</comment>
<organism>
    <name type="scientific">Chaetomium globosum (strain ATCC 6205 / CBS 148.51 / DSM 1962 / NBRC 6347 / NRRL 1970)</name>
    <name type="common">Soil fungus</name>
    <dbReference type="NCBI Taxonomy" id="306901"/>
    <lineage>
        <taxon>Eukaryota</taxon>
        <taxon>Fungi</taxon>
        <taxon>Dikarya</taxon>
        <taxon>Ascomycota</taxon>
        <taxon>Pezizomycotina</taxon>
        <taxon>Sordariomycetes</taxon>
        <taxon>Sordariomycetidae</taxon>
        <taxon>Sordariales</taxon>
        <taxon>Chaetomiaceae</taxon>
        <taxon>Chaetomium</taxon>
    </lineage>
</organism>
<sequence length="344" mass="36538">MTAPTTTSPSSEATTTTTTTTLNTIATLHQSLTTETTPLPVRFRALFSLKHVAATHPATSAESLAAIDAIAAGFASPSALLKHELAYCLGQTANGAAIPYLTAVLEDTGEDAMCRHEAAEALGALGDVASLGVLKRFRDREGEEVVVTETCELAVERIEWENGEGKKAEKLRASDFSSVDPAPPTAQGQEEQTVEELGNALMDTSLPLFKRYRAMFALRDLASPPDLPTAVPAVLALAKGFADSSALFRHEIAFVFGQLAHPASIPALTEALSNTEEASMVRHEAAEALGSLGDEEGVEETLRKFLHDAEAVVRESVIVALDMAEYEKSNETEYALIPEAQGTA</sequence>
<proteinExistence type="inferred from homology"/>
<name>DOHH_CHAGB</name>
<protein>
    <recommendedName>
        <fullName evidence="1">Deoxyhypusine hydroxylase</fullName>
        <shortName evidence="1">DOHH</shortName>
        <ecNumber evidence="1">1.14.99.29</ecNumber>
    </recommendedName>
    <alternativeName>
        <fullName evidence="1">Deoxyhypusine dioxygenase</fullName>
    </alternativeName>
    <alternativeName>
        <fullName evidence="1">Deoxyhypusine monooxygenase</fullName>
    </alternativeName>
</protein>
<reference key="1">
    <citation type="journal article" date="2015" name="Genome Announc.">
        <title>Draft genome sequence of the cellulolytic fungus Chaetomium globosum.</title>
        <authorList>
            <person name="Cuomo C.A."/>
            <person name="Untereiner W.A."/>
            <person name="Ma L.-J."/>
            <person name="Grabherr M."/>
            <person name="Birren B.W."/>
        </authorList>
    </citation>
    <scope>NUCLEOTIDE SEQUENCE [LARGE SCALE GENOMIC DNA]</scope>
    <source>
        <strain>ATCC 6205 / CBS 148.51 / DSM 1962 / NBRC 6347 / NRRL 1970</strain>
    </source>
</reference>